<feature type="chain" id="PRO_0000336841" description="UDP-N-acetylmuramate--L-alanine ligase">
    <location>
        <begin position="1"/>
        <end position="481"/>
    </location>
</feature>
<feature type="binding site" evidence="1">
    <location>
        <begin position="126"/>
        <end position="132"/>
    </location>
    <ligand>
        <name>ATP</name>
        <dbReference type="ChEBI" id="CHEBI:30616"/>
    </ligand>
</feature>
<comment type="function">
    <text evidence="1">Cell wall formation.</text>
</comment>
<comment type="catalytic activity">
    <reaction evidence="1">
        <text>UDP-N-acetyl-alpha-D-muramate + L-alanine + ATP = UDP-N-acetyl-alpha-D-muramoyl-L-alanine + ADP + phosphate + H(+)</text>
        <dbReference type="Rhea" id="RHEA:23372"/>
        <dbReference type="ChEBI" id="CHEBI:15378"/>
        <dbReference type="ChEBI" id="CHEBI:30616"/>
        <dbReference type="ChEBI" id="CHEBI:43474"/>
        <dbReference type="ChEBI" id="CHEBI:57972"/>
        <dbReference type="ChEBI" id="CHEBI:70757"/>
        <dbReference type="ChEBI" id="CHEBI:83898"/>
        <dbReference type="ChEBI" id="CHEBI:456216"/>
        <dbReference type="EC" id="6.3.2.8"/>
    </reaction>
</comment>
<comment type="pathway">
    <text evidence="1">Cell wall biogenesis; peptidoglycan biosynthesis.</text>
</comment>
<comment type="subcellular location">
    <subcellularLocation>
        <location evidence="1">Cytoplasm</location>
    </subcellularLocation>
</comment>
<comment type="similarity">
    <text evidence="1">Belongs to the MurCDEF family.</text>
</comment>
<keyword id="KW-0067">ATP-binding</keyword>
<keyword id="KW-0131">Cell cycle</keyword>
<keyword id="KW-0132">Cell division</keyword>
<keyword id="KW-0133">Cell shape</keyword>
<keyword id="KW-0961">Cell wall biogenesis/degradation</keyword>
<keyword id="KW-0963">Cytoplasm</keyword>
<keyword id="KW-0436">Ligase</keyword>
<keyword id="KW-0547">Nucleotide-binding</keyword>
<keyword id="KW-0573">Peptidoglycan synthesis</keyword>
<name>MURC_MARN8</name>
<evidence type="ECO:0000255" key="1">
    <source>
        <dbReference type="HAMAP-Rule" id="MF_00046"/>
    </source>
</evidence>
<organism>
    <name type="scientific">Marinobacter nauticus (strain ATCC 700491 / DSM 11845 / VT8)</name>
    <name type="common">Marinobacter aquaeolei</name>
    <dbReference type="NCBI Taxonomy" id="351348"/>
    <lineage>
        <taxon>Bacteria</taxon>
        <taxon>Pseudomonadati</taxon>
        <taxon>Pseudomonadota</taxon>
        <taxon>Gammaproteobacteria</taxon>
        <taxon>Pseudomonadales</taxon>
        <taxon>Marinobacteraceae</taxon>
        <taxon>Marinobacter</taxon>
    </lineage>
</organism>
<accession>A1U3F7</accession>
<reference key="1">
    <citation type="journal article" date="2011" name="Appl. Environ. Microbiol.">
        <title>Genomic potential of Marinobacter aquaeolei, a biogeochemical 'opportunitroph'.</title>
        <authorList>
            <person name="Singer E."/>
            <person name="Webb E.A."/>
            <person name="Nelson W.C."/>
            <person name="Heidelberg J.F."/>
            <person name="Ivanova N."/>
            <person name="Pati A."/>
            <person name="Edwards K.J."/>
        </authorList>
    </citation>
    <scope>NUCLEOTIDE SEQUENCE [LARGE SCALE GENOMIC DNA]</scope>
    <source>
        <strain>ATCC 700491 / DSM 11845 / VT8</strain>
    </source>
</reference>
<sequence length="481" mass="52136">MADATNPPLVYQVPEMRRIRRIHFVGIGGAGMSGIAEVLKNQGYDVSGSDIRDSAVTARLRAMDVDVYIGHRAENTDQADVVVVSSAVAGDNPEVVSARERRVPIVPRAEMLAEIMRYRHGIAVAGTHGKTTTTSLIASVLGEAGLDPTFVIGGKLNSAGTNAQLGGSRYLVAEADESDASFLHLTPVISVVTNIEADHMDTYGGDVEKLKQTFVDFLHNLPFYGVAVMCVDDDYVQEIIPRISRAIITYGIDNPDADYRAENITSDGLKTRFLVRRPGGRPDLQVELKMPGRHNVLNALATIAVATDEGVDDQAICRGLAGFAGVGRRFQVYGEYRTPKAAATLVDDYGHHPTEVEAVIRAAREAWPQRRIVMLYQPHRYTRTRDLYEDFVRVLSEVDGLLLMDVYSAGEPAIPGADGRALCRSIRQRGKVEPVFVEDNREIESLLANVLQDGDLLITQGAGDIGGVAARLAAAGVKASE</sequence>
<gene>
    <name evidence="1" type="primary">murC</name>
    <name type="ordered locus">Maqu_2451</name>
</gene>
<proteinExistence type="inferred from homology"/>
<dbReference type="EC" id="6.3.2.8" evidence="1"/>
<dbReference type="EMBL" id="CP000514">
    <property type="protein sequence ID" value="ABM19526.1"/>
    <property type="molecule type" value="Genomic_DNA"/>
</dbReference>
<dbReference type="RefSeq" id="WP_011785910.1">
    <property type="nucleotide sequence ID" value="NC_008740.1"/>
</dbReference>
<dbReference type="SMR" id="A1U3F7"/>
<dbReference type="STRING" id="351348.Maqu_2451"/>
<dbReference type="KEGG" id="maq:Maqu_2451"/>
<dbReference type="eggNOG" id="COG0773">
    <property type="taxonomic scope" value="Bacteria"/>
</dbReference>
<dbReference type="HOGENOM" id="CLU_028104_2_2_6"/>
<dbReference type="OrthoDB" id="9804126at2"/>
<dbReference type="UniPathway" id="UPA00219"/>
<dbReference type="Proteomes" id="UP000000998">
    <property type="component" value="Chromosome"/>
</dbReference>
<dbReference type="GO" id="GO:0005737">
    <property type="term" value="C:cytoplasm"/>
    <property type="evidence" value="ECO:0007669"/>
    <property type="project" value="UniProtKB-SubCell"/>
</dbReference>
<dbReference type="GO" id="GO:0005524">
    <property type="term" value="F:ATP binding"/>
    <property type="evidence" value="ECO:0007669"/>
    <property type="project" value="UniProtKB-UniRule"/>
</dbReference>
<dbReference type="GO" id="GO:0008763">
    <property type="term" value="F:UDP-N-acetylmuramate-L-alanine ligase activity"/>
    <property type="evidence" value="ECO:0007669"/>
    <property type="project" value="UniProtKB-UniRule"/>
</dbReference>
<dbReference type="GO" id="GO:0051301">
    <property type="term" value="P:cell division"/>
    <property type="evidence" value="ECO:0007669"/>
    <property type="project" value="UniProtKB-KW"/>
</dbReference>
<dbReference type="GO" id="GO:0071555">
    <property type="term" value="P:cell wall organization"/>
    <property type="evidence" value="ECO:0007669"/>
    <property type="project" value="UniProtKB-KW"/>
</dbReference>
<dbReference type="GO" id="GO:0009252">
    <property type="term" value="P:peptidoglycan biosynthetic process"/>
    <property type="evidence" value="ECO:0007669"/>
    <property type="project" value="UniProtKB-UniRule"/>
</dbReference>
<dbReference type="GO" id="GO:0008360">
    <property type="term" value="P:regulation of cell shape"/>
    <property type="evidence" value="ECO:0007669"/>
    <property type="project" value="UniProtKB-KW"/>
</dbReference>
<dbReference type="FunFam" id="3.40.1190.10:FF:000001">
    <property type="entry name" value="UDP-N-acetylmuramate--L-alanine ligase"/>
    <property type="match status" value="1"/>
</dbReference>
<dbReference type="FunFam" id="3.40.50.720:FF:000046">
    <property type="entry name" value="UDP-N-acetylmuramate--L-alanine ligase"/>
    <property type="match status" value="1"/>
</dbReference>
<dbReference type="Gene3D" id="3.90.190.20">
    <property type="entry name" value="Mur ligase, C-terminal domain"/>
    <property type="match status" value="1"/>
</dbReference>
<dbReference type="Gene3D" id="3.40.1190.10">
    <property type="entry name" value="Mur-like, catalytic domain"/>
    <property type="match status" value="1"/>
</dbReference>
<dbReference type="Gene3D" id="3.40.50.720">
    <property type="entry name" value="NAD(P)-binding Rossmann-like Domain"/>
    <property type="match status" value="1"/>
</dbReference>
<dbReference type="HAMAP" id="MF_00046">
    <property type="entry name" value="MurC"/>
    <property type="match status" value="1"/>
</dbReference>
<dbReference type="InterPro" id="IPR036565">
    <property type="entry name" value="Mur-like_cat_sf"/>
</dbReference>
<dbReference type="InterPro" id="IPR004101">
    <property type="entry name" value="Mur_ligase_C"/>
</dbReference>
<dbReference type="InterPro" id="IPR036615">
    <property type="entry name" value="Mur_ligase_C_dom_sf"/>
</dbReference>
<dbReference type="InterPro" id="IPR013221">
    <property type="entry name" value="Mur_ligase_cen"/>
</dbReference>
<dbReference type="InterPro" id="IPR000713">
    <property type="entry name" value="Mur_ligase_N"/>
</dbReference>
<dbReference type="InterPro" id="IPR050061">
    <property type="entry name" value="MurCDEF_pg_biosynth"/>
</dbReference>
<dbReference type="InterPro" id="IPR005758">
    <property type="entry name" value="UDP-N-AcMur_Ala_ligase_MurC"/>
</dbReference>
<dbReference type="NCBIfam" id="TIGR01082">
    <property type="entry name" value="murC"/>
    <property type="match status" value="1"/>
</dbReference>
<dbReference type="PANTHER" id="PTHR43445:SF3">
    <property type="entry name" value="UDP-N-ACETYLMURAMATE--L-ALANINE LIGASE"/>
    <property type="match status" value="1"/>
</dbReference>
<dbReference type="PANTHER" id="PTHR43445">
    <property type="entry name" value="UDP-N-ACETYLMURAMATE--L-ALANINE LIGASE-RELATED"/>
    <property type="match status" value="1"/>
</dbReference>
<dbReference type="Pfam" id="PF01225">
    <property type="entry name" value="Mur_ligase"/>
    <property type="match status" value="1"/>
</dbReference>
<dbReference type="Pfam" id="PF02875">
    <property type="entry name" value="Mur_ligase_C"/>
    <property type="match status" value="1"/>
</dbReference>
<dbReference type="Pfam" id="PF08245">
    <property type="entry name" value="Mur_ligase_M"/>
    <property type="match status" value="1"/>
</dbReference>
<dbReference type="SUPFAM" id="SSF51984">
    <property type="entry name" value="MurCD N-terminal domain"/>
    <property type="match status" value="1"/>
</dbReference>
<dbReference type="SUPFAM" id="SSF53623">
    <property type="entry name" value="MurD-like peptide ligases, catalytic domain"/>
    <property type="match status" value="1"/>
</dbReference>
<dbReference type="SUPFAM" id="SSF53244">
    <property type="entry name" value="MurD-like peptide ligases, peptide-binding domain"/>
    <property type="match status" value="1"/>
</dbReference>
<protein>
    <recommendedName>
        <fullName evidence="1">UDP-N-acetylmuramate--L-alanine ligase</fullName>
        <ecNumber evidence="1">6.3.2.8</ecNumber>
    </recommendedName>
    <alternativeName>
        <fullName evidence="1">UDP-N-acetylmuramoyl-L-alanine synthetase</fullName>
    </alternativeName>
</protein>